<gene>
    <name type="primary">Slc44a1</name>
    <name type="synonym">Cd92</name>
    <name type="synonym">Cdw92</name>
    <name type="synonym">Ctl1</name>
</gene>
<feature type="initiator methionine" description="Removed">
    <location>
        <position position="1"/>
    </location>
</feature>
<feature type="chain" id="PRO_0000191713" description="Choline transporter-like protein 1">
    <location>
        <begin position="2"/>
        <end position="653"/>
    </location>
</feature>
<feature type="topological domain" description="Cytoplasmic" evidence="3">
    <location>
        <begin position="2"/>
        <end position="29"/>
    </location>
</feature>
<feature type="transmembrane region" description="Helical" evidence="3">
    <location>
        <begin position="30"/>
        <end position="50"/>
    </location>
</feature>
<feature type="topological domain" description="Mitochondrial intermembrane" evidence="3">
    <location>
        <begin position="51"/>
        <end position="211"/>
    </location>
</feature>
<feature type="transmembrane region" description="Helical" evidence="3">
    <location>
        <begin position="212"/>
        <end position="232"/>
    </location>
</feature>
<feature type="topological domain" description="Cytoplasmic" evidence="3">
    <location>
        <begin position="233"/>
        <end position="237"/>
    </location>
</feature>
<feature type="transmembrane region" description="Helical" evidence="3">
    <location>
        <begin position="238"/>
        <end position="258"/>
    </location>
</feature>
<feature type="topological domain" description="Mitochondrial intermembrane" evidence="3">
    <location>
        <begin position="259"/>
        <end position="287"/>
    </location>
</feature>
<feature type="transmembrane region" description="Helical" evidence="3">
    <location>
        <begin position="288"/>
        <end position="308"/>
    </location>
</feature>
<feature type="topological domain" description="Cytoplasmic" evidence="3">
    <location>
        <begin position="309"/>
        <end position="314"/>
    </location>
</feature>
<feature type="transmembrane region" description="Helical" evidence="3">
    <location>
        <begin position="315"/>
        <end position="335"/>
    </location>
</feature>
<feature type="topological domain" description="Mitochondrial intermembrane" evidence="3">
    <location>
        <begin position="336"/>
        <end position="337"/>
    </location>
</feature>
<feature type="transmembrane region" description="Helical" evidence="3">
    <location>
        <begin position="338"/>
        <end position="358"/>
    </location>
</feature>
<feature type="topological domain" description="Cytoplasmic" evidence="3">
    <location>
        <begin position="359"/>
        <end position="379"/>
    </location>
</feature>
<feature type="transmembrane region" description="Helical" evidence="3">
    <location>
        <begin position="380"/>
        <end position="400"/>
    </location>
</feature>
<feature type="topological domain" description="Mitochondrial intermembrane" evidence="3">
    <location>
        <begin position="401"/>
        <end position="536"/>
    </location>
</feature>
<feature type="transmembrane region" description="Helical" evidence="3">
    <location>
        <begin position="537"/>
        <end position="557"/>
    </location>
</feature>
<feature type="topological domain" description="Cytoplasmic" evidence="3">
    <location>
        <begin position="558"/>
        <end position="565"/>
    </location>
</feature>
<feature type="transmembrane region" description="Helical" evidence="3">
    <location>
        <begin position="566"/>
        <end position="586"/>
    </location>
</feature>
<feature type="topological domain" description="Mitochondrial intermembrane" evidence="3">
    <location>
        <begin position="587"/>
        <end position="653"/>
    </location>
</feature>
<feature type="lipid moiety-binding region" description="N-myristoyl glycine" evidence="1">
    <location>
        <position position="2"/>
    </location>
</feature>
<feature type="splice variant" id="VSP_015428" description="In isoform 2." evidence="6">
    <original>LRKR</original>
    <variation>VGSEEEAAALHDFPFHFFSVCVFTDCTSSGEALVVCITQDMLLFLFACLPITWMAEVLSQLRLPSVKVS</variation>
    <location>
        <begin position="650"/>
        <end position="653"/>
    </location>
</feature>
<feature type="sequence conflict" description="In Ref. 1; AAP81042/AAP81043." evidence="7" ref="1">
    <original>P</original>
    <variation>L</variation>
    <location>
        <position position="426"/>
    </location>
</feature>
<feature type="sequence conflict" description="In Ref. 1; AAP81042/AAP81043." evidence="7" ref="1">
    <original>L</original>
    <variation>F</variation>
    <location>
        <position position="439"/>
    </location>
</feature>
<feature type="sequence conflict" description="In Ref. 1; AAP81042/AAP81043." evidence="7" ref="1">
    <original>F</original>
    <variation>L</variation>
    <location>
        <position position="510"/>
    </location>
</feature>
<reference key="1">
    <citation type="journal article" date="2004" name="Gene">
        <title>Identification and expression of a mouse muscle-specific CTL1 gene.</title>
        <authorList>
            <person name="Yuan Z."/>
            <person name="Wagner L."/>
            <person name="Poloumienko A."/>
            <person name="Bakovic M."/>
        </authorList>
    </citation>
    <scope>NUCLEOTIDE SEQUENCE [MRNA] (ISOFORMS 1 AND 2)</scope>
    <scope>TISSUE SPECIFICITY</scope>
    <scope>SUBCELLULAR LOCATION</scope>
    <scope>FUNCTION</scope>
    <scope>TRANSPORTER ACTIVITY</scope>
    <source>
        <tissue>Fibroblast</tissue>
    </source>
</reference>
<reference key="2">
    <citation type="journal article" date="2009" name="PLoS Biol.">
        <title>Lineage-specific biology revealed by a finished genome assembly of the mouse.</title>
        <authorList>
            <person name="Church D.M."/>
            <person name="Goodstadt L."/>
            <person name="Hillier L.W."/>
            <person name="Zody M.C."/>
            <person name="Goldstein S."/>
            <person name="She X."/>
            <person name="Bult C.J."/>
            <person name="Agarwala R."/>
            <person name="Cherry J.L."/>
            <person name="DiCuccio M."/>
            <person name="Hlavina W."/>
            <person name="Kapustin Y."/>
            <person name="Meric P."/>
            <person name="Maglott D."/>
            <person name="Birtle Z."/>
            <person name="Marques A.C."/>
            <person name="Graves T."/>
            <person name="Zhou S."/>
            <person name="Teague B."/>
            <person name="Potamousis K."/>
            <person name="Churas C."/>
            <person name="Place M."/>
            <person name="Herschleb J."/>
            <person name="Runnheim R."/>
            <person name="Forrest D."/>
            <person name="Amos-Landgraf J."/>
            <person name="Schwartz D.C."/>
            <person name="Cheng Z."/>
            <person name="Lindblad-Toh K."/>
            <person name="Eichler E.E."/>
            <person name="Ponting C.P."/>
        </authorList>
    </citation>
    <scope>NUCLEOTIDE SEQUENCE [LARGE SCALE GENOMIC DNA]</scope>
    <source>
        <strain>C57BL/6J</strain>
    </source>
</reference>
<reference key="3">
    <citation type="journal article" date="2004" name="Genome Res.">
        <title>The status, quality, and expansion of the NIH full-length cDNA project: the Mammalian Gene Collection (MGC).</title>
        <authorList>
            <consortium name="The MGC Project Team"/>
        </authorList>
    </citation>
    <scope>NUCLEOTIDE SEQUENCE [LARGE SCALE MRNA] (ISOFORM 1)</scope>
    <source>
        <strain>FVB/N</strain>
        <tissue>Liver</tissue>
        <tissue>Mammary gland</tissue>
    </source>
</reference>
<reference key="4">
    <citation type="journal article" date="2009" name="FASEB J.">
        <title>The solute carrier 44A1 is a mitochondrial protein and mediates choline transport.</title>
        <authorList>
            <person name="Michel V."/>
            <person name="Bakovic M."/>
        </authorList>
    </citation>
    <scope>FUNCTION</scope>
    <scope>TOPOLOGY</scope>
    <scope>SUBCELLULAR LOCATION</scope>
    <scope>TRANSPORTER ACTIVITY</scope>
</reference>
<reference key="5">
    <citation type="journal article" date="2010" name="Cell">
        <title>A tissue-specific atlas of mouse protein phosphorylation and expression.</title>
        <authorList>
            <person name="Huttlin E.L."/>
            <person name="Jedrychowski M.P."/>
            <person name="Elias J.E."/>
            <person name="Goswami T."/>
            <person name="Rad R."/>
            <person name="Beausoleil S.A."/>
            <person name="Villen J."/>
            <person name="Haas W."/>
            <person name="Sowa M.E."/>
            <person name="Gygi S.P."/>
        </authorList>
    </citation>
    <scope>IDENTIFICATION BY MASS SPECTROMETRY [LARGE SCALE ANALYSIS]</scope>
    <source>
        <tissue>Brain</tissue>
        <tissue>Kidney</tissue>
        <tissue>Pancreas</tissue>
    </source>
</reference>
<name>CTL1_MOUSE</name>
<organism>
    <name type="scientific">Mus musculus</name>
    <name type="common">Mouse</name>
    <dbReference type="NCBI Taxonomy" id="10090"/>
    <lineage>
        <taxon>Eukaryota</taxon>
        <taxon>Metazoa</taxon>
        <taxon>Chordata</taxon>
        <taxon>Craniata</taxon>
        <taxon>Vertebrata</taxon>
        <taxon>Euteleostomi</taxon>
        <taxon>Mammalia</taxon>
        <taxon>Eutheria</taxon>
        <taxon>Euarchontoglires</taxon>
        <taxon>Glires</taxon>
        <taxon>Rodentia</taxon>
        <taxon>Myomorpha</taxon>
        <taxon>Muroidea</taxon>
        <taxon>Muridae</taxon>
        <taxon>Murinae</taxon>
        <taxon>Mus</taxon>
        <taxon>Mus</taxon>
    </lineage>
</organism>
<sequence length="653" mass="73067">MGCCSSASAAQSSKREWKPLEDRSCTDIPWLLLFVLFCIGMGFICGFSVATGAAARLVSGYDSYGNICGQRNAKLEAIPNSGLDHTHRKYVFFLDPCNLDLINRKIKSIALCVAACPRQELKTLSDVQKFAEINGSALCSYNIKPSEYTLTSKSSGFCPKLPVPASAPIPFFHRCAPVNISCYAKFAEALITFVSDNSVLHRLISGVMTSKEIILGLCLLSLVLSMILMVIIRYISRVLVWILTVLVILGSLGGTGVLWWLYAKQRRSPKEAVIPEQLQIAEDNLRALLIYAISATVFTVILFLIMLVMRKRVALTIALFHVAGKVFIHLPLLVFQPFWTFFALVLFWAYWIMTLLFLGTTGSAVQNEQGFVEYKISGPLQYMWWYHVVGLIWISEFILACQQMTVAGAVVTYYFTRDKRNLPFTPILASVNRLIRYHLGTVAKGSFIITLVKIPRMVLMYIHSQLKGKENACARCMLKSCICCLWCLEKCLSYLNQNAYTATAINSTNFCTSAKDAFVILVENALRVAAINTVGDFMLFLGKVLIVCSTGLAGIMLLNYQQDYTVWVLPLIIVCLFAFLVAHCFLSIYEMVVDVLFLCFAIDTKYNDGSPGREFYMDKVLMEFVENSRKAMKEAGKGGAADARELKPMLRKR</sequence>
<keyword id="KW-0025">Alternative splicing</keyword>
<keyword id="KW-0050">Antiport</keyword>
<keyword id="KW-1003">Cell membrane</keyword>
<keyword id="KW-0449">Lipoprotein</keyword>
<keyword id="KW-0472">Membrane</keyword>
<keyword id="KW-0496">Mitochondrion</keyword>
<keyword id="KW-1000">Mitochondrion outer membrane</keyword>
<keyword id="KW-0519">Myristate</keyword>
<keyword id="KW-0597">Phosphoprotein</keyword>
<keyword id="KW-1185">Reference proteome</keyword>
<keyword id="KW-0812">Transmembrane</keyword>
<keyword id="KW-1133">Transmembrane helix</keyword>
<keyword id="KW-0813">Transport</keyword>
<dbReference type="EMBL" id="AY249865">
    <property type="protein sequence ID" value="AAP81042.1"/>
    <property type="molecule type" value="mRNA"/>
</dbReference>
<dbReference type="EMBL" id="AY249866">
    <property type="protein sequence ID" value="AAP81043.1"/>
    <property type="molecule type" value="mRNA"/>
</dbReference>
<dbReference type="EMBL" id="AL805900">
    <property type="status" value="NOT_ANNOTATED_CDS"/>
    <property type="molecule type" value="Genomic_DNA"/>
</dbReference>
<dbReference type="EMBL" id="AL807745">
    <property type="status" value="NOT_ANNOTATED_CDS"/>
    <property type="molecule type" value="Genomic_DNA"/>
</dbReference>
<dbReference type="EMBL" id="BC010258">
    <property type="protein sequence ID" value="AAH10258.1"/>
    <property type="molecule type" value="mRNA"/>
</dbReference>
<dbReference type="EMBL" id="BC025941">
    <property type="protein sequence ID" value="AAH25941.1"/>
    <property type="status" value="ALT_INIT"/>
    <property type="molecule type" value="mRNA"/>
</dbReference>
<dbReference type="EMBL" id="BC113167">
    <property type="protein sequence ID" value="AAI13168.1"/>
    <property type="molecule type" value="mRNA"/>
</dbReference>
<dbReference type="EMBL" id="BC113169">
    <property type="protein sequence ID" value="AAI13170.1"/>
    <property type="molecule type" value="mRNA"/>
</dbReference>
<dbReference type="CCDS" id="CCDS18189.1">
    <molecule id="Q6X893-1"/>
</dbReference>
<dbReference type="RefSeq" id="NP_598652.3">
    <molecule id="Q6X893-1"/>
    <property type="nucleotide sequence ID" value="NM_133891.3"/>
</dbReference>
<dbReference type="SMR" id="Q6X893"/>
<dbReference type="BioGRID" id="221443">
    <property type="interactions" value="7"/>
</dbReference>
<dbReference type="FunCoup" id="Q6X893">
    <property type="interactions" value="2173"/>
</dbReference>
<dbReference type="STRING" id="10090.ENSMUSP00000099975"/>
<dbReference type="TCDB" id="2.A.92.1.1">
    <property type="family name" value="the choline transporter-like (ctl) family"/>
</dbReference>
<dbReference type="GlyConnect" id="2210">
    <property type="glycosylation" value="5 N-Linked glycans (1 site)"/>
</dbReference>
<dbReference type="GlyCosmos" id="Q6X893">
    <property type="glycosylation" value="1 site, 4 glycans"/>
</dbReference>
<dbReference type="GlyGen" id="Q6X893">
    <property type="glycosylation" value="2 sites, 6 N-linked glycans (2 sites)"/>
</dbReference>
<dbReference type="iPTMnet" id="Q6X893"/>
<dbReference type="PhosphoSitePlus" id="Q6X893"/>
<dbReference type="SwissPalm" id="Q6X893"/>
<dbReference type="jPOST" id="Q6X893"/>
<dbReference type="PaxDb" id="10090-ENSMUSP00000099975"/>
<dbReference type="ProteomicsDB" id="285393">
    <molecule id="Q6X893-1"/>
</dbReference>
<dbReference type="ProteomicsDB" id="285394">
    <molecule id="Q6X893-2"/>
</dbReference>
<dbReference type="Pumba" id="Q6X893"/>
<dbReference type="Antibodypedia" id="14793">
    <property type="antibodies" value="299 antibodies from 30 providers"/>
</dbReference>
<dbReference type="DNASU" id="100434"/>
<dbReference type="Ensembl" id="ENSMUST00000102911.10">
    <molecule id="Q6X893-1"/>
    <property type="protein sequence ID" value="ENSMUSP00000099975.4"/>
    <property type="gene ID" value="ENSMUSG00000028412.18"/>
</dbReference>
<dbReference type="GeneID" id="100434"/>
<dbReference type="KEGG" id="mmu:100434"/>
<dbReference type="UCSC" id="uc008swz.2">
    <molecule id="Q6X893-1"/>
    <property type="organism name" value="mouse"/>
</dbReference>
<dbReference type="AGR" id="MGI:2140592"/>
<dbReference type="CTD" id="23446"/>
<dbReference type="MGI" id="MGI:2140592">
    <property type="gene designation" value="Slc44a1"/>
</dbReference>
<dbReference type="VEuPathDB" id="HostDB:ENSMUSG00000028412"/>
<dbReference type="eggNOG" id="KOG1362">
    <property type="taxonomic scope" value="Eukaryota"/>
</dbReference>
<dbReference type="GeneTree" id="ENSGT00940000157174"/>
<dbReference type="InParanoid" id="Q6X893"/>
<dbReference type="OMA" id="IEQRSCT"/>
<dbReference type="OrthoDB" id="420519at2759"/>
<dbReference type="TreeFam" id="TF313325"/>
<dbReference type="Reactome" id="R-MMU-1483191">
    <property type="pathway name" value="Synthesis of PC"/>
</dbReference>
<dbReference type="Reactome" id="R-MMU-425366">
    <property type="pathway name" value="Transport of bile salts and organic acids, metal ions and amine compounds"/>
</dbReference>
<dbReference type="Reactome" id="R-MMU-6798163">
    <property type="pathway name" value="Choline catabolism"/>
</dbReference>
<dbReference type="BioGRID-ORCS" id="100434">
    <property type="hits" value="4 hits in 79 CRISPR screens"/>
</dbReference>
<dbReference type="ChiTaRS" id="Slc44a1">
    <property type="organism name" value="mouse"/>
</dbReference>
<dbReference type="PRO" id="PR:Q6X893"/>
<dbReference type="Proteomes" id="UP000000589">
    <property type="component" value="Chromosome 4"/>
</dbReference>
<dbReference type="RNAct" id="Q6X893">
    <property type="molecule type" value="protein"/>
</dbReference>
<dbReference type="Bgee" id="ENSMUSG00000028412">
    <property type="expression patterns" value="Expressed in hair follicle and 289 other cell types or tissues"/>
</dbReference>
<dbReference type="ExpressionAtlas" id="Q6X893">
    <property type="expression patterns" value="baseline and differential"/>
</dbReference>
<dbReference type="GO" id="GO:0016020">
    <property type="term" value="C:membrane"/>
    <property type="evidence" value="ECO:0000314"/>
    <property type="project" value="MGI"/>
</dbReference>
<dbReference type="GO" id="GO:0005741">
    <property type="term" value="C:mitochondrial outer membrane"/>
    <property type="evidence" value="ECO:0000250"/>
    <property type="project" value="UniProtKB"/>
</dbReference>
<dbReference type="GO" id="GO:0005886">
    <property type="term" value="C:plasma membrane"/>
    <property type="evidence" value="ECO:0000250"/>
    <property type="project" value="UniProtKB"/>
</dbReference>
<dbReference type="GO" id="GO:0015297">
    <property type="term" value="F:antiporter activity"/>
    <property type="evidence" value="ECO:0007669"/>
    <property type="project" value="UniProtKB-KW"/>
</dbReference>
<dbReference type="GO" id="GO:0015220">
    <property type="term" value="F:choline transmembrane transporter activity"/>
    <property type="evidence" value="ECO:0000314"/>
    <property type="project" value="MGI"/>
</dbReference>
<dbReference type="GO" id="GO:0034228">
    <property type="term" value="F:ethanolamine transmembrane transporter activity"/>
    <property type="evidence" value="ECO:0000250"/>
    <property type="project" value="UniProtKB"/>
</dbReference>
<dbReference type="GO" id="GO:0015871">
    <property type="term" value="P:choline transport"/>
    <property type="evidence" value="ECO:0000314"/>
    <property type="project" value="MGI"/>
</dbReference>
<dbReference type="GO" id="GO:0034229">
    <property type="term" value="P:ethanolamine transport"/>
    <property type="evidence" value="ECO:0000250"/>
    <property type="project" value="UniProtKB"/>
</dbReference>
<dbReference type="GO" id="GO:0055085">
    <property type="term" value="P:transmembrane transport"/>
    <property type="evidence" value="ECO:0000315"/>
    <property type="project" value="ARUK-UCL"/>
</dbReference>
<dbReference type="InterPro" id="IPR007603">
    <property type="entry name" value="Choline_transptr-like"/>
</dbReference>
<dbReference type="PANTHER" id="PTHR12385">
    <property type="entry name" value="CHOLINE TRANSPORTER-LIKE (SLC FAMILY 44)"/>
    <property type="match status" value="1"/>
</dbReference>
<dbReference type="PANTHER" id="PTHR12385:SF56">
    <property type="entry name" value="CHOLINE TRANSPORTER-LIKE PROTEIN 1"/>
    <property type="match status" value="1"/>
</dbReference>
<dbReference type="Pfam" id="PF04515">
    <property type="entry name" value="Choline_transpo"/>
    <property type="match status" value="1"/>
</dbReference>
<evidence type="ECO:0000250" key="1"/>
<evidence type="ECO:0000250" key="2">
    <source>
        <dbReference type="UniProtKB" id="Q8WWI5"/>
    </source>
</evidence>
<evidence type="ECO:0000255" key="3"/>
<evidence type="ECO:0000269" key="4">
    <source>
    </source>
</evidence>
<evidence type="ECO:0000269" key="5">
    <source>
    </source>
</evidence>
<evidence type="ECO:0000303" key="6">
    <source>
    </source>
</evidence>
<evidence type="ECO:0000305" key="7"/>
<protein>
    <recommendedName>
        <fullName>Choline transporter-like protein 1</fullName>
    </recommendedName>
    <alternativeName>
        <fullName>Solute carrier family 44 member 1</fullName>
    </alternativeName>
    <cdAntigenName>CD92</cdAntigenName>
</protein>
<accession>Q6X893</accession>
<accession>Q14DK0</accession>
<accession>Q6X894</accession>
<accession>Q8R0Y4</accession>
<accession>Q91Z29</accession>
<proteinExistence type="evidence at protein level"/>
<comment type="function">
    <text evidence="2 4 5">Choline/H+ antiporter (PubMed:15474312, PubMed:19357133). Also acts as a high-affinity ethanolamine/H+ antiporter, regulating the supply of extracellular ethanolamine (Etn) for the CDP-Etn pathway, redistribute intracellular Etn and balance the CDP-Cho and CDP-Etn arms of the Kennedy pathway (By similarity). Involved in membrane synthesis and myelin production (PubMed:15474312, PubMed:19357133).</text>
</comment>
<comment type="catalytic activity">
    <reaction evidence="4 5">
        <text>choline(out) + n H(+)(in) = choline(in) + n H(+)(out)</text>
        <dbReference type="Rhea" id="RHEA:75463"/>
        <dbReference type="ChEBI" id="CHEBI:15354"/>
        <dbReference type="ChEBI" id="CHEBI:15378"/>
    </reaction>
</comment>
<comment type="catalytic activity">
    <reaction evidence="2">
        <text>ethanolamine(out) + n H(+)(in) = ethanolamine(in) + n H(+)(out)</text>
        <dbReference type="Rhea" id="RHEA:75467"/>
        <dbReference type="ChEBI" id="CHEBI:15378"/>
        <dbReference type="ChEBI" id="CHEBI:57603"/>
    </reaction>
</comment>
<comment type="subcellular location">
    <subcellularLocation>
        <location evidence="5">Cell membrane</location>
        <topology evidence="3">Multi-pass membrane protein</topology>
    </subcellularLocation>
    <subcellularLocation>
        <location evidence="5">Mitochondrion outer membrane</location>
        <topology evidence="3">Multi-pass membrane protein</topology>
    </subcellularLocation>
</comment>
<comment type="alternative products">
    <event type="alternative splicing"/>
    <isoform>
        <id>Q6X893-1</id>
        <name>1</name>
        <name>A</name>
        <sequence type="displayed"/>
    </isoform>
    <isoform>
        <id>Q6X893-2</id>
        <name>2</name>
        <name>B</name>
        <sequence type="described" ref="VSP_015428"/>
    </isoform>
</comment>
<comment type="tissue specificity">
    <text evidence="4">Specifically abundant in skeletal muscle (at protein level).</text>
</comment>
<comment type="similarity">
    <text evidence="7">Belongs to the CTL (choline transporter-like) family.</text>
</comment>
<comment type="sequence caution" evidence="7">
    <conflict type="erroneous initiation">
        <sequence resource="EMBL-CDS" id="AAH25941"/>
    </conflict>
    <text>Truncated N-terminus.</text>
</comment>